<gene>
    <name type="primary">HNMT</name>
</gene>
<feature type="chain" id="PRO_0000084021" description="Histamine N-methyltransferase">
    <location>
        <begin position="1"/>
        <end position="292"/>
    </location>
</feature>
<feature type="binding site">
    <location>
        <position position="28"/>
    </location>
    <ligand>
        <name>substrate</name>
    </ligand>
</feature>
<feature type="binding site">
    <location>
        <position position="60"/>
    </location>
    <ligand>
        <name>S-adenosyl-L-methionine</name>
        <dbReference type="ChEBI" id="CHEBI:59789"/>
    </ligand>
</feature>
<feature type="binding site">
    <location>
        <position position="89"/>
    </location>
    <ligand>
        <name>S-adenosyl-L-methionine</name>
        <dbReference type="ChEBI" id="CHEBI:59789"/>
    </ligand>
</feature>
<feature type="binding site">
    <location>
        <position position="94"/>
    </location>
    <ligand>
        <name>S-adenosyl-L-methionine</name>
        <dbReference type="ChEBI" id="CHEBI:59789"/>
    </ligand>
</feature>
<feature type="binding site">
    <location>
        <position position="120"/>
    </location>
    <ligand>
        <name>S-adenosyl-L-methionine</name>
        <dbReference type="ChEBI" id="CHEBI:59789"/>
    </ligand>
</feature>
<feature type="binding site">
    <location>
        <position position="142"/>
    </location>
    <ligand>
        <name>S-adenosyl-L-methionine</name>
        <dbReference type="ChEBI" id="CHEBI:59789"/>
    </ligand>
</feature>
<feature type="binding site">
    <location>
        <position position="283"/>
    </location>
    <ligand>
        <name>substrate</name>
    </ligand>
</feature>
<feature type="splice variant" id="VSP_043482" description="In isoform 3." evidence="7">
    <original>IGDTK</original>
    <variation>YQNCC</variation>
    <location>
        <begin position="47"/>
        <end position="51"/>
    </location>
</feature>
<feature type="splice variant" id="VSP_043483" description="In isoform 3." evidence="7">
    <location>
        <begin position="52"/>
        <end position="292"/>
    </location>
</feature>
<feature type="splice variant" id="VSP_042027" description="In isoform 2." evidence="6">
    <original>GEIDLQILSKVQAQYPGVCINNEVVEPSAEQIAKYKELVAKTSNLENVKFAWHKETSSEYQSRMLEKKELQKWDFIHMIQMLYYVKDIPATLKFFHSLLGTNAKMLIIVVSGSSGWDKLWKKYGSRFPQDDLCQYITSDDLTQMLDNLGLKYECYDLLSTMDISDCFIDGNENGDLLWDFLTETCNFNATAPPDLRAELGKDLQEPEFSAKKEGKVLFNNTLSFIVIEA</original>
    <variation>DCLIRGSSRVLKRNSCFILCSTRQKDKPGMRIHDERSSELPFGAARLESKSAFPSFLVSFILF</variation>
    <location>
        <begin position="64"/>
        <end position="292"/>
    </location>
</feature>
<feature type="sequence variant" id="VAR_076312" description="In MRT51; no effect on protein abundance; no effect on protein localization to the cytoplasm; decreased thermal stability; decreased ligand affinity for S-adenosyl-L-methionine; loss of histamine N-methyltransferase activity; dbSNP:rs758252808." evidence="4">
    <original>G</original>
    <variation>D</variation>
    <location>
        <position position="60"/>
    </location>
</feature>
<feature type="sequence variant" id="VAR_010252" description="In dbSNP:rs11558538." evidence="2 5">
    <original>T</original>
    <variation>I</variation>
    <location>
        <position position="105"/>
    </location>
</feature>
<feature type="sequence variant" id="VAR_076313" description="In MRT51; loss of protein solubility; increased aggregation in the cytoplasm; dbSNP:rs745756308." evidence="4">
    <original>L</original>
    <variation>P</variation>
    <location>
        <position position="208"/>
    </location>
</feature>
<feature type="sequence conflict" description="In Ref. 1; BAA03752." evidence="8" ref="1">
    <original>I</original>
    <variation>V</variation>
    <location>
        <position position="199"/>
    </location>
</feature>
<feature type="sequence conflict" description="In Ref. 9; AAH20677." evidence="8" ref="9">
    <original>N</original>
    <variation>D</variation>
    <location>
        <position position="234"/>
    </location>
</feature>
<feature type="helix" evidence="9">
    <location>
        <begin position="8"/>
        <end position="10"/>
    </location>
</feature>
<feature type="helix" evidence="9">
    <location>
        <begin position="12"/>
        <end position="23"/>
    </location>
</feature>
<feature type="helix" evidence="9">
    <location>
        <begin position="28"/>
        <end position="38"/>
    </location>
</feature>
<feature type="helix" evidence="9">
    <location>
        <begin position="40"/>
        <end position="43"/>
    </location>
</feature>
<feature type="strand" evidence="9">
    <location>
        <begin position="44"/>
        <end position="46"/>
    </location>
</feature>
<feature type="turn" evidence="9">
    <location>
        <begin position="47"/>
        <end position="50"/>
    </location>
</feature>
<feature type="strand" evidence="9">
    <location>
        <begin position="52"/>
        <end position="60"/>
    </location>
</feature>
<feature type="helix" evidence="9">
    <location>
        <begin position="65"/>
        <end position="77"/>
    </location>
</feature>
<feature type="strand" evidence="9">
    <location>
        <begin position="82"/>
        <end position="88"/>
    </location>
</feature>
<feature type="helix" evidence="9">
    <location>
        <begin position="92"/>
        <end position="103"/>
    </location>
</feature>
<feature type="strand" evidence="9">
    <location>
        <begin position="111"/>
        <end position="116"/>
    </location>
</feature>
<feature type="helix" evidence="9">
    <location>
        <begin position="120"/>
        <end position="128"/>
    </location>
</feature>
<feature type="turn" evidence="9">
    <location>
        <begin position="129"/>
        <end position="131"/>
    </location>
</feature>
<feature type="strand" evidence="9">
    <location>
        <begin position="136"/>
        <end position="143"/>
    </location>
</feature>
<feature type="helix" evidence="9">
    <location>
        <begin position="145"/>
        <end position="147"/>
    </location>
</feature>
<feature type="helix" evidence="9">
    <location>
        <begin position="151"/>
        <end position="160"/>
    </location>
</feature>
<feature type="strand" evidence="9">
    <location>
        <begin position="162"/>
        <end position="173"/>
    </location>
</feature>
<feature type="strand" evidence="10">
    <location>
        <begin position="175"/>
        <end position="177"/>
    </location>
</feature>
<feature type="helix" evidence="9">
    <location>
        <begin position="178"/>
        <end position="186"/>
    </location>
</feature>
<feature type="helix" evidence="9">
    <location>
        <begin position="187"/>
        <end position="189"/>
    </location>
</feature>
<feature type="helix" evidence="9">
    <location>
        <begin position="201"/>
        <end position="211"/>
    </location>
</feature>
<feature type="strand" evidence="9">
    <location>
        <begin position="215"/>
        <end position="220"/>
    </location>
</feature>
<feature type="strand" evidence="9">
    <location>
        <begin position="223"/>
        <end position="225"/>
    </location>
</feature>
<feature type="helix" evidence="9">
    <location>
        <begin position="227"/>
        <end position="230"/>
    </location>
</feature>
<feature type="helix" evidence="9">
    <location>
        <begin position="235"/>
        <end position="245"/>
    </location>
</feature>
<feature type="strand" evidence="9">
    <location>
        <begin position="247"/>
        <end position="249"/>
    </location>
</feature>
<feature type="helix" evidence="9">
    <location>
        <begin position="250"/>
        <end position="253"/>
    </location>
</feature>
<feature type="helix" evidence="9">
    <location>
        <begin position="256"/>
        <end position="265"/>
    </location>
</feature>
<feature type="turn" evidence="9">
    <location>
        <begin position="269"/>
        <end position="271"/>
    </location>
</feature>
<feature type="strand" evidence="9">
    <location>
        <begin position="272"/>
        <end position="275"/>
    </location>
</feature>
<feature type="strand" evidence="9">
    <location>
        <begin position="278"/>
        <end position="282"/>
    </location>
</feature>
<feature type="strand" evidence="9">
    <location>
        <begin position="285"/>
        <end position="291"/>
    </location>
</feature>
<name>HNMT_HUMAN</name>
<reference key="1">
    <citation type="journal article" date="1994" name="Am. J. Physiol.">
        <title>Structure and function of human histamine N-methyltransferase: critical enzyme in histamine metabolism in airway.</title>
        <authorList>
            <person name="Yamauchi K."/>
            <person name="Sekizawa K."/>
            <person name="Suzuki H."/>
            <person name="Nakazawa H."/>
            <person name="Ohkawara Y."/>
            <person name="Katayose D."/>
            <person name="Ohtsu H."/>
            <person name="Tamura G."/>
            <person name="Shibahara S."/>
            <person name="Takemura M."/>
        </authorList>
    </citation>
    <scope>NUCLEOTIDE SEQUENCE [MRNA] (ISOFORM 1)</scope>
    <source>
        <tissue>Kidney</tissue>
    </source>
</reference>
<reference key="2">
    <citation type="journal article" date="1994" name="Mol. Pharmacol.">
        <title>Human histamine N-methyltransferase pharmacogenetics: cloning and expression of kidney cDNA.</title>
        <authorList>
            <person name="Girard B."/>
            <person name="Otterness D.M."/>
            <person name="Wood T.C."/>
            <person name="Honchel R."/>
            <person name="Wieben E.D."/>
            <person name="Weinshilboum R.M."/>
        </authorList>
    </citation>
    <scope>NUCLEOTIDE SEQUENCE [MRNA] (ISOFORM 1)</scope>
    <source>
        <tissue>Kidney</tissue>
    </source>
</reference>
<reference key="3">
    <citation type="journal article" date="1996" name="Biochem. Biophys. Res. Commun.">
        <title>Human histamine N-methyltransferase gene: structural characterization and chromosomal location.</title>
        <authorList>
            <person name="Aksoy S."/>
            <person name="Raftogianis R."/>
            <person name="Weinshilboum R.M."/>
        </authorList>
    </citation>
    <scope>NUCLEOTIDE SEQUENCE [GENOMIC DNA]</scope>
</reference>
<reference key="4">
    <citation type="submission" date="2002-06" db="EMBL/GenBank/DDBJ databases">
        <title>Further characterization of the histamine N-methyltransferase gene: a new mRNA species and several 3'-UTR Variants from human brain.</title>
        <authorList>
            <person name="Barnes W.G."/>
            <person name="Grinde E."/>
            <person name="Crawford D.R."/>
            <person name="Herrick-Davis K."/>
            <person name="Hough L.B."/>
        </authorList>
    </citation>
    <scope>NUCLEOTIDE SEQUENCE [MRNA] (ISOFORM 1)</scope>
    <source>
        <tissue>Brain</tissue>
    </source>
</reference>
<reference key="5">
    <citation type="journal article" date="2004" name="Genomics">
        <title>Characterization of a new mRNA species from the human histamine N-methyltransferase gene.</title>
        <authorList>
            <person name="Barnes W.G."/>
            <person name="Grinde E."/>
            <person name="Crawford D.R."/>
            <person name="Herrick-Davis K."/>
            <person name="Hough L.B."/>
        </authorList>
    </citation>
    <scope>NUCLEOTIDE SEQUENCE [MRNA] (ISOFORM 2)</scope>
    <scope>ALTERNATIVE SPLICING</scope>
    <source>
        <tissue>Brain</tissue>
    </source>
</reference>
<reference key="6">
    <citation type="journal article" date="2004" name="Nat. Genet.">
        <title>Complete sequencing and characterization of 21,243 full-length human cDNAs.</title>
        <authorList>
            <person name="Ota T."/>
            <person name="Suzuki Y."/>
            <person name="Nishikawa T."/>
            <person name="Otsuki T."/>
            <person name="Sugiyama T."/>
            <person name="Irie R."/>
            <person name="Wakamatsu A."/>
            <person name="Hayashi K."/>
            <person name="Sato H."/>
            <person name="Nagai K."/>
            <person name="Kimura K."/>
            <person name="Makita H."/>
            <person name="Sekine M."/>
            <person name="Obayashi M."/>
            <person name="Nishi T."/>
            <person name="Shibahara T."/>
            <person name="Tanaka T."/>
            <person name="Ishii S."/>
            <person name="Yamamoto J."/>
            <person name="Saito K."/>
            <person name="Kawai Y."/>
            <person name="Isono Y."/>
            <person name="Nakamura Y."/>
            <person name="Nagahari K."/>
            <person name="Murakami K."/>
            <person name="Yasuda T."/>
            <person name="Iwayanagi T."/>
            <person name="Wagatsuma M."/>
            <person name="Shiratori A."/>
            <person name="Sudo H."/>
            <person name="Hosoiri T."/>
            <person name="Kaku Y."/>
            <person name="Kodaira H."/>
            <person name="Kondo H."/>
            <person name="Sugawara M."/>
            <person name="Takahashi M."/>
            <person name="Kanda K."/>
            <person name="Yokoi T."/>
            <person name="Furuya T."/>
            <person name="Kikkawa E."/>
            <person name="Omura Y."/>
            <person name="Abe K."/>
            <person name="Kamihara K."/>
            <person name="Katsuta N."/>
            <person name="Sato K."/>
            <person name="Tanikawa M."/>
            <person name="Yamazaki M."/>
            <person name="Ninomiya K."/>
            <person name="Ishibashi T."/>
            <person name="Yamashita H."/>
            <person name="Murakawa K."/>
            <person name="Fujimori K."/>
            <person name="Tanai H."/>
            <person name="Kimata M."/>
            <person name="Watanabe M."/>
            <person name="Hiraoka S."/>
            <person name="Chiba Y."/>
            <person name="Ishida S."/>
            <person name="Ono Y."/>
            <person name="Takiguchi S."/>
            <person name="Watanabe S."/>
            <person name="Yosida M."/>
            <person name="Hotuta T."/>
            <person name="Kusano J."/>
            <person name="Kanehori K."/>
            <person name="Takahashi-Fujii A."/>
            <person name="Hara H."/>
            <person name="Tanase T.-O."/>
            <person name="Nomura Y."/>
            <person name="Togiya S."/>
            <person name="Komai F."/>
            <person name="Hara R."/>
            <person name="Takeuchi K."/>
            <person name="Arita M."/>
            <person name="Imose N."/>
            <person name="Musashino K."/>
            <person name="Yuuki H."/>
            <person name="Oshima A."/>
            <person name="Sasaki N."/>
            <person name="Aotsuka S."/>
            <person name="Yoshikawa Y."/>
            <person name="Matsunawa H."/>
            <person name="Ichihara T."/>
            <person name="Shiohata N."/>
            <person name="Sano S."/>
            <person name="Moriya S."/>
            <person name="Momiyama H."/>
            <person name="Satoh N."/>
            <person name="Takami S."/>
            <person name="Terashima Y."/>
            <person name="Suzuki O."/>
            <person name="Nakagawa S."/>
            <person name="Senoh A."/>
            <person name="Mizoguchi H."/>
            <person name="Goto Y."/>
            <person name="Shimizu F."/>
            <person name="Wakebe H."/>
            <person name="Hishigaki H."/>
            <person name="Watanabe T."/>
            <person name="Sugiyama A."/>
            <person name="Takemoto M."/>
            <person name="Kawakami B."/>
            <person name="Yamazaki M."/>
            <person name="Watanabe K."/>
            <person name="Kumagai A."/>
            <person name="Itakura S."/>
            <person name="Fukuzumi Y."/>
            <person name="Fujimori Y."/>
            <person name="Komiyama M."/>
            <person name="Tashiro H."/>
            <person name="Tanigami A."/>
            <person name="Fujiwara T."/>
            <person name="Ono T."/>
            <person name="Yamada K."/>
            <person name="Fujii Y."/>
            <person name="Ozaki K."/>
            <person name="Hirao M."/>
            <person name="Ohmori Y."/>
            <person name="Kawabata A."/>
            <person name="Hikiji T."/>
            <person name="Kobatake N."/>
            <person name="Inagaki H."/>
            <person name="Ikema Y."/>
            <person name="Okamoto S."/>
            <person name="Okitani R."/>
            <person name="Kawakami T."/>
            <person name="Noguchi S."/>
            <person name="Itoh T."/>
            <person name="Shigeta K."/>
            <person name="Senba T."/>
            <person name="Matsumura K."/>
            <person name="Nakajima Y."/>
            <person name="Mizuno T."/>
            <person name="Morinaga M."/>
            <person name="Sasaki M."/>
            <person name="Togashi T."/>
            <person name="Oyama M."/>
            <person name="Hata H."/>
            <person name="Watanabe M."/>
            <person name="Komatsu T."/>
            <person name="Mizushima-Sugano J."/>
            <person name="Satoh T."/>
            <person name="Shirai Y."/>
            <person name="Takahashi Y."/>
            <person name="Nakagawa K."/>
            <person name="Okumura K."/>
            <person name="Nagase T."/>
            <person name="Nomura N."/>
            <person name="Kikuchi H."/>
            <person name="Masuho Y."/>
            <person name="Yamashita R."/>
            <person name="Nakai K."/>
            <person name="Yada T."/>
            <person name="Nakamura Y."/>
            <person name="Ohara O."/>
            <person name="Isogai T."/>
            <person name="Sugano S."/>
        </authorList>
    </citation>
    <scope>NUCLEOTIDE SEQUENCE [LARGE SCALE MRNA] (ISOFORM 1)</scope>
    <source>
        <tissue>Cerebellum</tissue>
    </source>
</reference>
<reference key="7">
    <citation type="journal article" date="2005" name="Nature">
        <title>Generation and annotation of the DNA sequences of human chromosomes 2 and 4.</title>
        <authorList>
            <person name="Hillier L.W."/>
            <person name="Graves T.A."/>
            <person name="Fulton R.S."/>
            <person name="Fulton L.A."/>
            <person name="Pepin K.H."/>
            <person name="Minx P."/>
            <person name="Wagner-McPherson C."/>
            <person name="Layman D."/>
            <person name="Wylie K."/>
            <person name="Sekhon M."/>
            <person name="Becker M.C."/>
            <person name="Fewell G.A."/>
            <person name="Delehaunty K.D."/>
            <person name="Miner T.L."/>
            <person name="Nash W.E."/>
            <person name="Kremitzki C."/>
            <person name="Oddy L."/>
            <person name="Du H."/>
            <person name="Sun H."/>
            <person name="Bradshaw-Cordum H."/>
            <person name="Ali J."/>
            <person name="Carter J."/>
            <person name="Cordes M."/>
            <person name="Harris A."/>
            <person name="Isak A."/>
            <person name="van Brunt A."/>
            <person name="Nguyen C."/>
            <person name="Du F."/>
            <person name="Courtney L."/>
            <person name="Kalicki J."/>
            <person name="Ozersky P."/>
            <person name="Abbott S."/>
            <person name="Armstrong J."/>
            <person name="Belter E.A."/>
            <person name="Caruso L."/>
            <person name="Cedroni M."/>
            <person name="Cotton M."/>
            <person name="Davidson T."/>
            <person name="Desai A."/>
            <person name="Elliott G."/>
            <person name="Erb T."/>
            <person name="Fronick C."/>
            <person name="Gaige T."/>
            <person name="Haakenson W."/>
            <person name="Haglund K."/>
            <person name="Holmes A."/>
            <person name="Harkins R."/>
            <person name="Kim K."/>
            <person name="Kruchowski S.S."/>
            <person name="Strong C.M."/>
            <person name="Grewal N."/>
            <person name="Goyea E."/>
            <person name="Hou S."/>
            <person name="Levy A."/>
            <person name="Martinka S."/>
            <person name="Mead K."/>
            <person name="McLellan M.D."/>
            <person name="Meyer R."/>
            <person name="Randall-Maher J."/>
            <person name="Tomlinson C."/>
            <person name="Dauphin-Kohlberg S."/>
            <person name="Kozlowicz-Reilly A."/>
            <person name="Shah N."/>
            <person name="Swearengen-Shahid S."/>
            <person name="Snider J."/>
            <person name="Strong J.T."/>
            <person name="Thompson J."/>
            <person name="Yoakum M."/>
            <person name="Leonard S."/>
            <person name="Pearman C."/>
            <person name="Trani L."/>
            <person name="Radionenko M."/>
            <person name="Waligorski J.E."/>
            <person name="Wang C."/>
            <person name="Rock S.M."/>
            <person name="Tin-Wollam A.-M."/>
            <person name="Maupin R."/>
            <person name="Latreille P."/>
            <person name="Wendl M.C."/>
            <person name="Yang S.-P."/>
            <person name="Pohl C."/>
            <person name="Wallis J.W."/>
            <person name="Spieth J."/>
            <person name="Bieri T.A."/>
            <person name="Berkowicz N."/>
            <person name="Nelson J.O."/>
            <person name="Osborne J."/>
            <person name="Ding L."/>
            <person name="Meyer R."/>
            <person name="Sabo A."/>
            <person name="Shotland Y."/>
            <person name="Sinha P."/>
            <person name="Wohldmann P.E."/>
            <person name="Cook L.L."/>
            <person name="Hickenbotham M.T."/>
            <person name="Eldred J."/>
            <person name="Williams D."/>
            <person name="Jones T.A."/>
            <person name="She X."/>
            <person name="Ciccarelli F.D."/>
            <person name="Izaurralde E."/>
            <person name="Taylor J."/>
            <person name="Schmutz J."/>
            <person name="Myers R.M."/>
            <person name="Cox D.R."/>
            <person name="Huang X."/>
            <person name="McPherson J.D."/>
            <person name="Mardis E.R."/>
            <person name="Clifton S.W."/>
            <person name="Warren W.C."/>
            <person name="Chinwalla A.T."/>
            <person name="Eddy S.R."/>
            <person name="Marra M.A."/>
            <person name="Ovcharenko I."/>
            <person name="Furey T.S."/>
            <person name="Miller W."/>
            <person name="Eichler E.E."/>
            <person name="Bork P."/>
            <person name="Suyama M."/>
            <person name="Torrents D."/>
            <person name="Waterston R.H."/>
            <person name="Wilson R.K."/>
        </authorList>
    </citation>
    <scope>NUCLEOTIDE SEQUENCE [LARGE SCALE GENOMIC DNA]</scope>
</reference>
<reference key="8">
    <citation type="submission" date="2005-09" db="EMBL/GenBank/DDBJ databases">
        <authorList>
            <person name="Mural R.J."/>
            <person name="Istrail S."/>
            <person name="Sutton G.G."/>
            <person name="Florea L."/>
            <person name="Halpern A.L."/>
            <person name="Mobarry C.M."/>
            <person name="Lippert R."/>
            <person name="Walenz B."/>
            <person name="Shatkay H."/>
            <person name="Dew I."/>
            <person name="Miller J.R."/>
            <person name="Flanigan M.J."/>
            <person name="Edwards N.J."/>
            <person name="Bolanos R."/>
            <person name="Fasulo D."/>
            <person name="Halldorsson B.V."/>
            <person name="Hannenhalli S."/>
            <person name="Turner R."/>
            <person name="Yooseph S."/>
            <person name="Lu F."/>
            <person name="Nusskern D.R."/>
            <person name="Shue B.C."/>
            <person name="Zheng X.H."/>
            <person name="Zhong F."/>
            <person name="Delcher A.L."/>
            <person name="Huson D.H."/>
            <person name="Kravitz S.A."/>
            <person name="Mouchard L."/>
            <person name="Reinert K."/>
            <person name="Remington K.A."/>
            <person name="Clark A.G."/>
            <person name="Waterman M.S."/>
            <person name="Eichler E.E."/>
            <person name="Adams M.D."/>
            <person name="Hunkapiller M.W."/>
            <person name="Myers E.W."/>
            <person name="Venter J.C."/>
        </authorList>
    </citation>
    <scope>NUCLEOTIDE SEQUENCE [LARGE SCALE GENOMIC DNA]</scope>
</reference>
<reference key="9">
    <citation type="journal article" date="2004" name="Genome Res.">
        <title>The status, quality, and expansion of the NIH full-length cDNA project: the Mammalian Gene Collection (MGC).</title>
        <authorList>
            <consortium name="The MGC Project Team"/>
        </authorList>
    </citation>
    <scope>NUCLEOTIDE SEQUENCE [LARGE SCALE MRNA] (ISOFORMS 1 AND 3)</scope>
    <source>
        <tissue>Liver</tissue>
        <tissue>Prostate</tissue>
    </source>
</reference>
<reference key="10">
    <citation type="submission" date="2002-01" db="EMBL/GenBank/DDBJ databases">
        <title>Homo sapiens histamine N-methyltransferase (HNMT) gene, consensus of Coriell PDR 90.</title>
        <authorList>
            <person name="Thomae B."/>
            <person name="Wieben E."/>
            <person name="Eckloff B."/>
            <person name="Weinshilboum R.M."/>
        </authorList>
    </citation>
    <scope>NUCLEOTIDE SEQUENCE [GENOMIC DNA] OF 1-221</scope>
</reference>
<reference key="11">
    <citation type="journal article" date="2011" name="BMC Syst. Biol.">
        <title>Initial characterization of the human central proteome.</title>
        <authorList>
            <person name="Burkard T.R."/>
            <person name="Planyavsky M."/>
            <person name="Kaupe I."/>
            <person name="Breitwieser F.P."/>
            <person name="Buerckstuemmer T."/>
            <person name="Bennett K.L."/>
            <person name="Superti-Furga G."/>
            <person name="Colinge J."/>
        </authorList>
    </citation>
    <scope>IDENTIFICATION BY MASS SPECTROMETRY [LARGE SCALE ANALYSIS]</scope>
</reference>
<reference key="12">
    <citation type="journal article" date="2014" name="J. Proteomics">
        <title>An enzyme assisted RP-RPLC approach for in-depth analysis of human liver phosphoproteome.</title>
        <authorList>
            <person name="Bian Y."/>
            <person name="Song C."/>
            <person name="Cheng K."/>
            <person name="Dong M."/>
            <person name="Wang F."/>
            <person name="Huang J."/>
            <person name="Sun D."/>
            <person name="Wang L."/>
            <person name="Ye M."/>
            <person name="Zou H."/>
        </authorList>
    </citation>
    <scope>IDENTIFICATION BY MASS SPECTROMETRY [LARGE SCALE ANALYSIS]</scope>
    <source>
        <tissue>Liver</tissue>
    </source>
</reference>
<reference key="13">
    <citation type="journal article" date="2001" name="Structure">
        <title>Two polymorphic forms of human histamine methyltransferase: structural, thermal, and kinetic comparisons.</title>
        <authorList>
            <person name="Horton J.R."/>
            <person name="Sawada K."/>
            <person name="Nishibori M."/>
            <person name="Zhang X."/>
            <person name="Cheng X."/>
        </authorList>
    </citation>
    <scope>X-RAY CRYSTALLOGRAPHY (1.9 ANGSTROMS) IN COMPLEX WITH SUBSTRATES AND INHIBITOR</scope>
</reference>
<reference key="14">
    <citation type="journal article" date="1998" name="Mol. Pharmacol.">
        <title>Human histamine N-methyltransferase pharmacogenetics: common genetic polymorphisms that alter activity.</title>
        <authorList>
            <person name="Preuss C.V."/>
            <person name="Wood T.C."/>
            <person name="Szumlanski C.L."/>
            <person name="Raftogianis R.B."/>
            <person name="Otterness D.M."/>
            <person name="Girard B."/>
            <person name="Scott M.C."/>
            <person name="Weinshilboum R.M."/>
        </authorList>
    </citation>
    <scope>VARIANT ILE-105</scope>
    <scope>POLYMORPHISM</scope>
</reference>
<reference key="15">
    <citation type="journal article" date="2000" name="Pharmacogenetics">
        <title>Histamine N-methyltransferase pharmacogenetics: association of a common functional polymorphism with asthma.</title>
        <authorList>
            <person name="Yan L."/>
            <person name="Galinsky R.E."/>
            <person name="Bernstein J.A."/>
            <person name="Liggett S.B."/>
            <person name="Weinshilboum R.M."/>
        </authorList>
    </citation>
    <scope>VARIANT ILE-105</scope>
    <scope>POLYMORPHISM</scope>
</reference>
<reference key="16">
    <citation type="journal article" date="2015" name="Hum. Mol. Genet.">
        <title>Mutations in the histamine N-methyltransferase gene, HNMT, are associated with nonsyndromic autosomal recessive intellectual disability.</title>
        <authorList>
            <person name="Heidari A."/>
            <person name="Tongsook C."/>
            <person name="Najafipour R."/>
            <person name="Musante L."/>
            <person name="Vasli N."/>
            <person name="Garshasbi M."/>
            <person name="Hu H."/>
            <person name="Mittal K."/>
            <person name="McNaughton A.J."/>
            <person name="Sritharan K."/>
            <person name="Hudson M."/>
            <person name="Stehr H."/>
            <person name="Talebi S."/>
            <person name="Moradi M."/>
            <person name="Darvish H."/>
            <person name="Arshad Rafiq M."/>
            <person name="Mozhdehipanah H."/>
            <person name="Rashidinejad A."/>
            <person name="Samiei S."/>
            <person name="Ghadami M."/>
            <person name="Windpassinger C."/>
            <person name="Gillessen-Kaesbach G."/>
            <person name="Tzschach A."/>
            <person name="Ahmed I."/>
            <person name="Mikhailov A."/>
            <person name="Stavropoulos D.J."/>
            <person name="Carter M.T."/>
            <person name="Keshavarz S."/>
            <person name="Ayub M."/>
            <person name="Najmabadi H."/>
            <person name="Liu X."/>
            <person name="Ropers H.H."/>
            <person name="Macheroux P."/>
            <person name="Vincent J.B."/>
        </authorList>
    </citation>
    <scope>INVOLVEMENT IN MRT51</scope>
    <scope>VARIANTS MRT51 ASP-60 AND PRO-208</scope>
    <scope>CHARACTERIZATION OF VARIANTS MRT51 ASP-60 AND PRO-208</scope>
    <scope>FUNCTION</scope>
    <scope>CATALYTIC ACTIVITY</scope>
    <scope>BIOPHYSICOCHEMICAL PROPERTIES</scope>
    <scope>SUBCELLULAR LOCATION</scope>
</reference>
<dbReference type="EC" id="2.1.1.8" evidence="4"/>
<dbReference type="EMBL" id="D16224">
    <property type="protein sequence ID" value="BAA03752.1"/>
    <property type="molecule type" value="mRNA"/>
</dbReference>
<dbReference type="EMBL" id="U08092">
    <property type="protein sequence ID" value="AAA17423.1"/>
    <property type="molecule type" value="mRNA"/>
</dbReference>
<dbReference type="EMBL" id="U44111">
    <property type="protein sequence ID" value="AAB18137.1"/>
    <property type="molecule type" value="Genomic_DNA"/>
</dbReference>
<dbReference type="EMBL" id="U44106">
    <property type="protein sequence ID" value="AAB18137.1"/>
    <property type="status" value="JOINED"/>
    <property type="molecule type" value="Genomic_DNA"/>
</dbReference>
<dbReference type="EMBL" id="U44107">
    <property type="protein sequence ID" value="AAB18137.1"/>
    <property type="status" value="JOINED"/>
    <property type="molecule type" value="Genomic_DNA"/>
</dbReference>
<dbReference type="EMBL" id="U44108">
    <property type="protein sequence ID" value="AAB18137.1"/>
    <property type="status" value="JOINED"/>
    <property type="molecule type" value="Genomic_DNA"/>
</dbReference>
<dbReference type="EMBL" id="U44109">
    <property type="protein sequence ID" value="AAB18137.1"/>
    <property type="status" value="JOINED"/>
    <property type="molecule type" value="Genomic_DNA"/>
</dbReference>
<dbReference type="EMBL" id="U44110">
    <property type="protein sequence ID" value="AAB18137.1"/>
    <property type="status" value="JOINED"/>
    <property type="molecule type" value="Genomic_DNA"/>
</dbReference>
<dbReference type="EMBL" id="AF523358">
    <property type="protein sequence ID" value="AAN33016.1"/>
    <property type="molecule type" value="mRNA"/>
</dbReference>
<dbReference type="EMBL" id="AF523359">
    <property type="protein sequence ID" value="AAN33017.1"/>
    <property type="molecule type" value="mRNA"/>
</dbReference>
<dbReference type="EMBL" id="AF523360">
    <property type="protein sequence ID" value="AAN33018.1"/>
    <property type="molecule type" value="mRNA"/>
</dbReference>
<dbReference type="EMBL" id="AF523356">
    <property type="protein sequence ID" value="AAN33014.1"/>
    <property type="molecule type" value="mRNA"/>
</dbReference>
<dbReference type="EMBL" id="AF523357">
    <property type="protein sequence ID" value="AAN33015.1"/>
    <property type="molecule type" value="mRNA"/>
</dbReference>
<dbReference type="EMBL" id="AK313804">
    <property type="protein sequence ID" value="BAG36540.1"/>
    <property type="molecule type" value="mRNA"/>
</dbReference>
<dbReference type="EMBL" id="AC093674">
    <property type="protein sequence ID" value="AAY24212.1"/>
    <property type="molecule type" value="Genomic_DNA"/>
</dbReference>
<dbReference type="EMBL" id="CH471058">
    <property type="protein sequence ID" value="EAX11612.1"/>
    <property type="molecule type" value="Genomic_DNA"/>
</dbReference>
<dbReference type="EMBL" id="CH471058">
    <property type="protein sequence ID" value="EAX11613.1"/>
    <property type="molecule type" value="Genomic_DNA"/>
</dbReference>
<dbReference type="EMBL" id="CH471058">
    <property type="protein sequence ID" value="EAX11614.1"/>
    <property type="molecule type" value="Genomic_DNA"/>
</dbReference>
<dbReference type="EMBL" id="BC005907">
    <property type="protein sequence ID" value="AAH05907.1"/>
    <property type="molecule type" value="mRNA"/>
</dbReference>
<dbReference type="EMBL" id="BC020677">
    <property type="protein sequence ID" value="AAH20677.1"/>
    <property type="molecule type" value="mRNA"/>
</dbReference>
<dbReference type="EMBL" id="AH012839">
    <property type="protein sequence ID" value="AAP42155.1"/>
    <property type="molecule type" value="Genomic_DNA"/>
</dbReference>
<dbReference type="CCDS" id="CCDS2181.1">
    <molecule id="P50135-1"/>
</dbReference>
<dbReference type="CCDS" id="CCDS33296.1">
    <molecule id="P50135-2"/>
</dbReference>
<dbReference type="CCDS" id="CCDS33297.1">
    <molecule id="P50135-3"/>
</dbReference>
<dbReference type="PIR" id="G01409">
    <property type="entry name" value="G01409"/>
</dbReference>
<dbReference type="RefSeq" id="NP_001019245.1">
    <molecule id="P50135-3"/>
    <property type="nucleotide sequence ID" value="NM_001024074.3"/>
</dbReference>
<dbReference type="RefSeq" id="NP_001019246.1">
    <molecule id="P50135-2"/>
    <property type="nucleotide sequence ID" value="NM_001024075.3"/>
</dbReference>
<dbReference type="RefSeq" id="NP_008826.1">
    <molecule id="P50135-1"/>
    <property type="nucleotide sequence ID" value="NM_006895.3"/>
</dbReference>
<dbReference type="PDB" id="1JQD">
    <property type="method" value="X-ray"/>
    <property type="resolution" value="2.28 A"/>
    <property type="chains" value="A/B=1-292"/>
</dbReference>
<dbReference type="PDB" id="1JQE">
    <property type="method" value="X-ray"/>
    <property type="resolution" value="1.91 A"/>
    <property type="chains" value="A/B=1-292"/>
</dbReference>
<dbReference type="PDB" id="2AOT">
    <property type="method" value="X-ray"/>
    <property type="resolution" value="1.90 A"/>
    <property type="chains" value="A/B=1-292"/>
</dbReference>
<dbReference type="PDB" id="2AOU">
    <property type="method" value="X-ray"/>
    <property type="resolution" value="2.30 A"/>
    <property type="chains" value="A/B=1-292"/>
</dbReference>
<dbReference type="PDB" id="2AOV">
    <property type="method" value="X-ray"/>
    <property type="resolution" value="2.48 A"/>
    <property type="chains" value="A/B=1-292"/>
</dbReference>
<dbReference type="PDB" id="2AOW">
    <property type="method" value="X-ray"/>
    <property type="resolution" value="2.97 A"/>
    <property type="chains" value="A/B=1-292"/>
</dbReference>
<dbReference type="PDB" id="2AOX">
    <property type="method" value="X-ray"/>
    <property type="resolution" value="3.12 A"/>
    <property type="chains" value="A/B=1-292"/>
</dbReference>
<dbReference type="PDBsum" id="1JQD"/>
<dbReference type="PDBsum" id="1JQE"/>
<dbReference type="PDBsum" id="2AOT"/>
<dbReference type="PDBsum" id="2AOU"/>
<dbReference type="PDBsum" id="2AOV"/>
<dbReference type="PDBsum" id="2AOW"/>
<dbReference type="PDBsum" id="2AOX"/>
<dbReference type="SMR" id="P50135"/>
<dbReference type="BioGRID" id="109418">
    <property type="interactions" value="13"/>
</dbReference>
<dbReference type="FunCoup" id="P50135">
    <property type="interactions" value="1009"/>
</dbReference>
<dbReference type="IntAct" id="P50135">
    <property type="interactions" value="6"/>
</dbReference>
<dbReference type="MINT" id="P50135"/>
<dbReference type="STRING" id="9606.ENSP00000280097"/>
<dbReference type="BindingDB" id="P50135"/>
<dbReference type="ChEMBL" id="CHEMBL2190"/>
<dbReference type="DrugBank" id="DB00613">
    <property type="generic name" value="Amodiaquine"/>
</dbReference>
<dbReference type="DrugBank" id="DB01075">
    <property type="generic name" value="Diphenhydramine"/>
</dbReference>
<dbReference type="DrugBank" id="DB13875">
    <property type="generic name" value="Harmaline"/>
</dbReference>
<dbReference type="DrugBank" id="DB05381">
    <property type="generic name" value="Histamine"/>
</dbReference>
<dbReference type="DrugBank" id="DB04655">
    <property type="generic name" value="Metoprine"/>
</dbReference>
<dbReference type="DrugBank" id="DB01103">
    <property type="generic name" value="Quinacrine"/>
</dbReference>
<dbReference type="DrugBank" id="DB01752">
    <property type="generic name" value="S-adenosyl-L-homocysteine"/>
</dbReference>
<dbReference type="DrugBank" id="DB07106">
    <property type="generic name" value="SKF-91488"/>
</dbReference>
<dbReference type="DrugCentral" id="P50135"/>
<dbReference type="iPTMnet" id="P50135"/>
<dbReference type="PhosphoSitePlus" id="P50135"/>
<dbReference type="BioMuta" id="HNMT"/>
<dbReference type="DMDM" id="1708272"/>
<dbReference type="jPOST" id="P50135"/>
<dbReference type="MassIVE" id="P50135"/>
<dbReference type="PaxDb" id="9606-ENSP00000280097"/>
<dbReference type="PeptideAtlas" id="P50135"/>
<dbReference type="ProteomicsDB" id="56195">
    <molecule id="P50135-1"/>
</dbReference>
<dbReference type="ProteomicsDB" id="56196">
    <molecule id="P50135-2"/>
</dbReference>
<dbReference type="ProteomicsDB" id="56197">
    <molecule id="P50135-3"/>
</dbReference>
<dbReference type="Pumba" id="P50135"/>
<dbReference type="Antibodypedia" id="33593">
    <property type="antibodies" value="306 antibodies from 32 providers"/>
</dbReference>
<dbReference type="DNASU" id="3176"/>
<dbReference type="Ensembl" id="ENST00000280096.5">
    <molecule id="P50135-3"/>
    <property type="protein sequence ID" value="ENSP00000280096.5"/>
    <property type="gene ID" value="ENSG00000150540.14"/>
</dbReference>
<dbReference type="Ensembl" id="ENST00000280097.5">
    <molecule id="P50135-1"/>
    <property type="protein sequence ID" value="ENSP00000280097.3"/>
    <property type="gene ID" value="ENSG00000150540.14"/>
</dbReference>
<dbReference type="Ensembl" id="ENST00000329366.8">
    <molecule id="P50135-2"/>
    <property type="protein sequence ID" value="ENSP00000333259.4"/>
    <property type="gene ID" value="ENSG00000150540.14"/>
</dbReference>
<dbReference type="Ensembl" id="ENST00000410115.5">
    <molecule id="P50135-1"/>
    <property type="protein sequence ID" value="ENSP00000386940.1"/>
    <property type="gene ID" value="ENSG00000150540.14"/>
</dbReference>
<dbReference type="Ensembl" id="ENST00000475675.5">
    <molecule id="P50135-3"/>
    <property type="protein sequence ID" value="ENSP00000419415.1"/>
    <property type="gene ID" value="ENSG00000150540.14"/>
</dbReference>
<dbReference type="GeneID" id="3176"/>
<dbReference type="KEGG" id="hsa:3176"/>
<dbReference type="MANE-Select" id="ENST00000280097.5">
    <property type="protein sequence ID" value="ENSP00000280097.3"/>
    <property type="RefSeq nucleotide sequence ID" value="NM_006895.3"/>
    <property type="RefSeq protein sequence ID" value="NP_008826.1"/>
</dbReference>
<dbReference type="UCSC" id="uc002tvd.4">
    <molecule id="P50135-1"/>
    <property type="organism name" value="human"/>
</dbReference>
<dbReference type="AGR" id="HGNC:5028"/>
<dbReference type="CTD" id="3176"/>
<dbReference type="DisGeNET" id="3176"/>
<dbReference type="GeneCards" id="HNMT"/>
<dbReference type="HGNC" id="HGNC:5028">
    <property type="gene designation" value="HNMT"/>
</dbReference>
<dbReference type="HPA" id="ENSG00000150540">
    <property type="expression patterns" value="Tissue enhanced (liver)"/>
</dbReference>
<dbReference type="MalaCards" id="HNMT"/>
<dbReference type="MIM" id="605238">
    <property type="type" value="gene"/>
</dbReference>
<dbReference type="MIM" id="616739">
    <property type="type" value="phenotype"/>
</dbReference>
<dbReference type="neXtProt" id="NX_P50135"/>
<dbReference type="OpenTargets" id="ENSG00000150540"/>
<dbReference type="Orphanet" id="88616">
    <property type="disease" value="Autosomal recessive non-syndromic intellectual disability"/>
</dbReference>
<dbReference type="PharmGKB" id="PA190"/>
<dbReference type="VEuPathDB" id="HostDB:ENSG00000150540"/>
<dbReference type="eggNOG" id="ENOG502QQJ1">
    <property type="taxonomic scope" value="Eukaryota"/>
</dbReference>
<dbReference type="GeneTree" id="ENSGT00390000002862"/>
<dbReference type="HOGENOM" id="CLU_058117_1_0_1"/>
<dbReference type="InParanoid" id="P50135"/>
<dbReference type="OMA" id="KNIKFAW"/>
<dbReference type="OrthoDB" id="5984880at2759"/>
<dbReference type="PAN-GO" id="P50135">
    <property type="GO annotations" value="2 GO annotations based on evolutionary models"/>
</dbReference>
<dbReference type="PhylomeDB" id="P50135"/>
<dbReference type="TreeFam" id="TF331080"/>
<dbReference type="BioCyc" id="MetaCyc:HS07674-MONOMER"/>
<dbReference type="BRENDA" id="2.1.1.8">
    <property type="organism ID" value="2681"/>
</dbReference>
<dbReference type="PathwayCommons" id="P50135"/>
<dbReference type="Reactome" id="R-HSA-2408508">
    <property type="pathway name" value="Metabolism of ingested SeMet, Sec, MeSec into H2Se"/>
</dbReference>
<dbReference type="Reactome" id="R-HSA-70921">
    <property type="pathway name" value="Histidine catabolism"/>
</dbReference>
<dbReference type="SABIO-RK" id="P50135"/>
<dbReference type="SignaLink" id="P50135"/>
<dbReference type="BioGRID-ORCS" id="3176">
    <property type="hits" value="17 hits in 1164 CRISPR screens"/>
</dbReference>
<dbReference type="ChiTaRS" id="HNMT">
    <property type="organism name" value="human"/>
</dbReference>
<dbReference type="EvolutionaryTrace" id="P50135"/>
<dbReference type="GenomeRNAi" id="3176"/>
<dbReference type="Pharos" id="P50135">
    <property type="development level" value="Tchem"/>
</dbReference>
<dbReference type="PRO" id="PR:P50135"/>
<dbReference type="Proteomes" id="UP000005640">
    <property type="component" value="Chromosome 2"/>
</dbReference>
<dbReference type="RNAct" id="P50135">
    <property type="molecule type" value="protein"/>
</dbReference>
<dbReference type="Bgee" id="ENSG00000150540">
    <property type="expression patterns" value="Expressed in gall bladder and 205 other cell types or tissues"/>
</dbReference>
<dbReference type="GO" id="GO:0005813">
    <property type="term" value="C:centrosome"/>
    <property type="evidence" value="ECO:0000314"/>
    <property type="project" value="HPA"/>
</dbReference>
<dbReference type="GO" id="GO:0005737">
    <property type="term" value="C:cytoplasm"/>
    <property type="evidence" value="ECO:0000314"/>
    <property type="project" value="UniProtKB"/>
</dbReference>
<dbReference type="GO" id="GO:0005829">
    <property type="term" value="C:cytosol"/>
    <property type="evidence" value="ECO:0000314"/>
    <property type="project" value="ARUK-UCL"/>
</dbReference>
<dbReference type="GO" id="GO:0070062">
    <property type="term" value="C:extracellular exosome"/>
    <property type="evidence" value="ECO:0007005"/>
    <property type="project" value="UniProtKB"/>
</dbReference>
<dbReference type="GO" id="GO:0005654">
    <property type="term" value="C:nucleoplasm"/>
    <property type="evidence" value="ECO:0000314"/>
    <property type="project" value="HPA"/>
</dbReference>
<dbReference type="GO" id="GO:0046539">
    <property type="term" value="F:histamine N-methyltransferase activity"/>
    <property type="evidence" value="ECO:0000314"/>
    <property type="project" value="UniProtKB"/>
</dbReference>
<dbReference type="GO" id="GO:0001695">
    <property type="term" value="P:histamine catabolic process"/>
    <property type="evidence" value="ECO:0000314"/>
    <property type="project" value="UniProtKB"/>
</dbReference>
<dbReference type="GO" id="GO:0001692">
    <property type="term" value="P:histamine metabolic process"/>
    <property type="evidence" value="ECO:0000315"/>
    <property type="project" value="ARUK-UCL"/>
</dbReference>
<dbReference type="GO" id="GO:0006548">
    <property type="term" value="P:L-histidine catabolic process"/>
    <property type="evidence" value="ECO:0000304"/>
    <property type="project" value="Reactome"/>
</dbReference>
<dbReference type="GO" id="GO:0032259">
    <property type="term" value="P:methylation"/>
    <property type="evidence" value="ECO:0000314"/>
    <property type="project" value="UniProtKB"/>
</dbReference>
<dbReference type="GO" id="GO:0007585">
    <property type="term" value="P:respiratory gaseous exchange by respiratory system"/>
    <property type="evidence" value="ECO:0000304"/>
    <property type="project" value="ProtInc"/>
</dbReference>
<dbReference type="CDD" id="cd02440">
    <property type="entry name" value="AdoMet_MTases"/>
    <property type="match status" value="1"/>
</dbReference>
<dbReference type="FunFam" id="3.40.50.150:FF:000118">
    <property type="entry name" value="Histamine N-methyltransferase"/>
    <property type="match status" value="1"/>
</dbReference>
<dbReference type="Gene3D" id="3.40.50.150">
    <property type="entry name" value="Vaccinia Virus protein VP39"/>
    <property type="match status" value="1"/>
</dbReference>
<dbReference type="InterPro" id="IPR016673">
    <property type="entry name" value="HHMT-like"/>
</dbReference>
<dbReference type="InterPro" id="IPR029063">
    <property type="entry name" value="SAM-dependent_MTases_sf"/>
</dbReference>
<dbReference type="Pfam" id="PF13489">
    <property type="entry name" value="Methyltransf_23"/>
    <property type="match status" value="1"/>
</dbReference>
<dbReference type="PIRSF" id="PIRSF016616">
    <property type="entry name" value="HHMT"/>
    <property type="match status" value="1"/>
</dbReference>
<dbReference type="SUPFAM" id="SSF53335">
    <property type="entry name" value="S-adenosyl-L-methionine-dependent methyltransferases"/>
    <property type="match status" value="1"/>
</dbReference>
<dbReference type="PROSITE" id="PS51597">
    <property type="entry name" value="SAM_HNMT"/>
    <property type="match status" value="1"/>
</dbReference>
<proteinExistence type="evidence at protein level"/>
<accession>P50135</accession>
<accession>B2R9J3</accession>
<accession>Q546Z6</accession>
<accession>Q7Z7I2</accession>
<accession>Q8IU56</accession>
<accession>Q8WW98</accession>
<accession>Q9BRW6</accession>
<evidence type="ECO:0000255" key="1">
    <source>
        <dbReference type="PROSITE-ProRule" id="PRU00929"/>
    </source>
</evidence>
<evidence type="ECO:0000269" key="2">
    <source>
    </source>
</evidence>
<evidence type="ECO:0000269" key="3">
    <source>
    </source>
</evidence>
<evidence type="ECO:0000269" key="4">
    <source>
    </source>
</evidence>
<evidence type="ECO:0000269" key="5">
    <source>
    </source>
</evidence>
<evidence type="ECO:0000303" key="6">
    <source>
    </source>
</evidence>
<evidence type="ECO:0000303" key="7">
    <source>
    </source>
</evidence>
<evidence type="ECO:0000305" key="8"/>
<evidence type="ECO:0007829" key="9">
    <source>
        <dbReference type="PDB" id="2AOT"/>
    </source>
</evidence>
<evidence type="ECO:0007829" key="10">
    <source>
        <dbReference type="PDB" id="2AOW"/>
    </source>
</evidence>
<organism>
    <name type="scientific">Homo sapiens</name>
    <name type="common">Human</name>
    <dbReference type="NCBI Taxonomy" id="9606"/>
    <lineage>
        <taxon>Eukaryota</taxon>
        <taxon>Metazoa</taxon>
        <taxon>Chordata</taxon>
        <taxon>Craniata</taxon>
        <taxon>Vertebrata</taxon>
        <taxon>Euteleostomi</taxon>
        <taxon>Mammalia</taxon>
        <taxon>Eutheria</taxon>
        <taxon>Euarchontoglires</taxon>
        <taxon>Primates</taxon>
        <taxon>Haplorrhini</taxon>
        <taxon>Catarrhini</taxon>
        <taxon>Hominidae</taxon>
        <taxon>Homo</taxon>
    </lineage>
</organism>
<comment type="function">
    <text evidence="4">Inactivates histamine by N-methylation. Plays an important role in degrading histamine and in regulating the airway response to histamine.</text>
</comment>
<comment type="catalytic activity">
    <reaction evidence="1 4">
        <text>histamine + S-adenosyl-L-methionine = N(tau)-methylhistamine + S-adenosyl-L-homocysteine + H(+)</text>
        <dbReference type="Rhea" id="RHEA:19301"/>
        <dbReference type="ChEBI" id="CHEBI:15378"/>
        <dbReference type="ChEBI" id="CHEBI:57856"/>
        <dbReference type="ChEBI" id="CHEBI:58432"/>
        <dbReference type="ChEBI" id="CHEBI:58600"/>
        <dbReference type="ChEBI" id="CHEBI:59789"/>
        <dbReference type="EC" id="2.1.1.8"/>
    </reaction>
</comment>
<comment type="biophysicochemical properties">
    <kinetics>
        <KM evidence="4">5.47 uM for histamine (at pH 8.0 and 25 degrees Celsius)</KM>
    </kinetics>
</comment>
<comment type="subunit">
    <text evidence="3">Monomer.</text>
</comment>
<comment type="subcellular location">
    <subcellularLocation>
        <location evidence="4">Cytoplasm</location>
    </subcellularLocation>
</comment>
<comment type="alternative products">
    <event type="alternative splicing"/>
    <isoform>
        <id>P50135-1</id>
        <name>1</name>
        <sequence type="displayed"/>
    </isoform>
    <isoform>
        <id>P50135-2</id>
        <name>2</name>
        <name>HNMT-S</name>
        <sequence type="described" ref="VSP_042027"/>
    </isoform>
    <isoform>
        <id>P50135-3</id>
        <name>3</name>
        <sequence type="described" ref="VSP_043482 VSP_043483"/>
    </isoform>
</comment>
<comment type="polymorphism">
    <text evidence="2 5">Variant Ile-105 has a reduced activity and seems to be linked with a predisposition to asthma.</text>
</comment>
<comment type="disease" evidence="4">
    <disease id="DI-04633">
        <name>Intellectual developmental disorder, autosomal recessive 51</name>
        <acronym>MRT51</acronym>
        <description>A disorder characterized by significantly below average general intellectual functioning associated with impairments in adaptive behavior and manifested during the developmental period.</description>
        <dbReference type="MIM" id="616739"/>
    </disease>
    <text>The disease is caused by variants affecting distinct genetic loci, including the gene represented in this entry.</text>
</comment>
<comment type="miscellaneous">
    <molecule>Isoform 2</molecule>
    <text evidence="8">Has no histamine-methylating activity.</text>
</comment>
<comment type="similarity">
    <text evidence="1">Belongs to the class I-like SAM-binding methyltransferase superfamily. HNMT family.</text>
</comment>
<protein>
    <recommendedName>
        <fullName>Histamine N-methyltransferase</fullName>
        <shortName>HMT</shortName>
        <ecNumber evidence="4">2.1.1.8</ecNumber>
    </recommendedName>
</protein>
<sequence>MASSMRSLFSDHGKYVESFRRFLNHSTEHQCMQEFMDKKLPGIIGRIGDTKSEIKILSIGGGAGEIDLQILSKVQAQYPGVCINNEVVEPSAEQIAKYKELVAKTSNLENVKFAWHKETSSEYQSRMLEKKELQKWDFIHMIQMLYYVKDIPATLKFFHSLLGTNAKMLIIVVSGSSGWDKLWKKYGSRFPQDDLCQYITSDDLTQMLDNLGLKYECYDLLSTMDISDCFIDGNENGDLLWDFLTETCNFNATAPPDLRAELGKDLQEPEFSAKKEGKVLFNNTLSFIVIEA</sequence>
<keyword id="KW-0002">3D-structure</keyword>
<keyword id="KW-0025">Alternative splicing</keyword>
<keyword id="KW-0963">Cytoplasm</keyword>
<keyword id="KW-0225">Disease variant</keyword>
<keyword id="KW-0991">Intellectual disability</keyword>
<keyword id="KW-0489">Methyltransferase</keyword>
<keyword id="KW-1267">Proteomics identification</keyword>
<keyword id="KW-1185">Reference proteome</keyword>
<keyword id="KW-0949">S-adenosyl-L-methionine</keyword>
<keyword id="KW-0808">Transferase</keyword>